<gene>
    <name evidence="1" type="primary">rsmH</name>
    <name type="synonym">mraW</name>
    <name type="ordered locus">lhv_0851</name>
</gene>
<accession>A8YUN6</accession>
<keyword id="KW-0963">Cytoplasm</keyword>
<keyword id="KW-0489">Methyltransferase</keyword>
<keyword id="KW-0698">rRNA processing</keyword>
<keyword id="KW-0949">S-adenosyl-L-methionine</keyword>
<keyword id="KW-0808">Transferase</keyword>
<reference key="1">
    <citation type="journal article" date="2008" name="J. Bacteriol.">
        <title>Genome sequence of Lactobacillus helveticus: an organism distinguished by selective gene loss and IS element expansion.</title>
        <authorList>
            <person name="Callanan M."/>
            <person name="Kaleta P."/>
            <person name="O'Callaghan J."/>
            <person name="O'Sullivan O."/>
            <person name="Jordan K."/>
            <person name="McAuliffe O."/>
            <person name="Sangrador-Vegas A."/>
            <person name="Slattery L."/>
            <person name="Fitzgerald G.F."/>
            <person name="Beresford T."/>
            <person name="Ross R.P."/>
        </authorList>
    </citation>
    <scope>NUCLEOTIDE SEQUENCE [LARGE SCALE GENOMIC DNA]</scope>
    <source>
        <strain>DPC 4571</strain>
    </source>
</reference>
<proteinExistence type="inferred from homology"/>
<evidence type="ECO:0000255" key="1">
    <source>
        <dbReference type="HAMAP-Rule" id="MF_01007"/>
    </source>
</evidence>
<evidence type="ECO:0000256" key="2">
    <source>
        <dbReference type="SAM" id="MobiDB-lite"/>
    </source>
</evidence>
<organism>
    <name type="scientific">Lactobacillus helveticus (strain DPC 4571)</name>
    <dbReference type="NCBI Taxonomy" id="405566"/>
    <lineage>
        <taxon>Bacteria</taxon>
        <taxon>Bacillati</taxon>
        <taxon>Bacillota</taxon>
        <taxon>Bacilli</taxon>
        <taxon>Lactobacillales</taxon>
        <taxon>Lactobacillaceae</taxon>
        <taxon>Lactobacillus</taxon>
    </lineage>
</organism>
<protein>
    <recommendedName>
        <fullName evidence="1">Ribosomal RNA small subunit methyltransferase H</fullName>
        <ecNumber evidence="1">2.1.1.199</ecNumber>
    </recommendedName>
    <alternativeName>
        <fullName evidence="1">16S rRNA m(4)C1402 methyltransferase</fullName>
    </alternativeName>
    <alternativeName>
        <fullName evidence="1">rRNA (cytosine-N(4)-)-methyltransferase RsmH</fullName>
    </alternativeName>
</protein>
<dbReference type="EC" id="2.1.1.199" evidence="1"/>
<dbReference type="EMBL" id="CP000517">
    <property type="protein sequence ID" value="ABX26974.1"/>
    <property type="molecule type" value="Genomic_DNA"/>
</dbReference>
<dbReference type="RefSeq" id="WP_012211697.1">
    <property type="nucleotide sequence ID" value="NC_010080.1"/>
</dbReference>
<dbReference type="SMR" id="A8YUN6"/>
<dbReference type="KEGG" id="lhe:lhv_0851"/>
<dbReference type="eggNOG" id="COG0275">
    <property type="taxonomic scope" value="Bacteria"/>
</dbReference>
<dbReference type="HOGENOM" id="CLU_038422_2_0_9"/>
<dbReference type="Proteomes" id="UP000000790">
    <property type="component" value="Chromosome"/>
</dbReference>
<dbReference type="GO" id="GO:0005737">
    <property type="term" value="C:cytoplasm"/>
    <property type="evidence" value="ECO:0007669"/>
    <property type="project" value="UniProtKB-SubCell"/>
</dbReference>
<dbReference type="GO" id="GO:0071424">
    <property type="term" value="F:rRNA (cytosine-N4-)-methyltransferase activity"/>
    <property type="evidence" value="ECO:0007669"/>
    <property type="project" value="UniProtKB-UniRule"/>
</dbReference>
<dbReference type="GO" id="GO:0070475">
    <property type="term" value="P:rRNA base methylation"/>
    <property type="evidence" value="ECO:0007669"/>
    <property type="project" value="UniProtKB-UniRule"/>
</dbReference>
<dbReference type="Gene3D" id="1.10.150.170">
    <property type="entry name" value="Putative methyltransferase TM0872, insert domain"/>
    <property type="match status" value="1"/>
</dbReference>
<dbReference type="Gene3D" id="3.40.50.150">
    <property type="entry name" value="Vaccinia Virus protein VP39"/>
    <property type="match status" value="1"/>
</dbReference>
<dbReference type="HAMAP" id="MF_01007">
    <property type="entry name" value="16SrRNA_methyltr_H"/>
    <property type="match status" value="1"/>
</dbReference>
<dbReference type="InterPro" id="IPR002903">
    <property type="entry name" value="RsmH"/>
</dbReference>
<dbReference type="InterPro" id="IPR023397">
    <property type="entry name" value="SAM-dep_MeTrfase_MraW_recog"/>
</dbReference>
<dbReference type="InterPro" id="IPR029063">
    <property type="entry name" value="SAM-dependent_MTases_sf"/>
</dbReference>
<dbReference type="NCBIfam" id="TIGR00006">
    <property type="entry name" value="16S rRNA (cytosine(1402)-N(4))-methyltransferase RsmH"/>
    <property type="match status" value="1"/>
</dbReference>
<dbReference type="PANTHER" id="PTHR11265:SF0">
    <property type="entry name" value="12S RRNA N4-METHYLCYTIDINE METHYLTRANSFERASE"/>
    <property type="match status" value="1"/>
</dbReference>
<dbReference type="PANTHER" id="PTHR11265">
    <property type="entry name" value="S-ADENOSYL-METHYLTRANSFERASE MRAW"/>
    <property type="match status" value="1"/>
</dbReference>
<dbReference type="Pfam" id="PF01795">
    <property type="entry name" value="Methyltransf_5"/>
    <property type="match status" value="1"/>
</dbReference>
<dbReference type="PIRSF" id="PIRSF004486">
    <property type="entry name" value="MraW"/>
    <property type="match status" value="1"/>
</dbReference>
<dbReference type="SUPFAM" id="SSF81799">
    <property type="entry name" value="Putative methyltransferase TM0872, insert domain"/>
    <property type="match status" value="1"/>
</dbReference>
<dbReference type="SUPFAM" id="SSF53335">
    <property type="entry name" value="S-adenosyl-L-methionine-dependent methyltransferases"/>
    <property type="match status" value="1"/>
</dbReference>
<comment type="function">
    <text evidence="1">Specifically methylates the N4 position of cytidine in position 1402 (C1402) of 16S rRNA.</text>
</comment>
<comment type="catalytic activity">
    <reaction evidence="1">
        <text>cytidine(1402) in 16S rRNA + S-adenosyl-L-methionine = N(4)-methylcytidine(1402) in 16S rRNA + S-adenosyl-L-homocysteine + H(+)</text>
        <dbReference type="Rhea" id="RHEA:42928"/>
        <dbReference type="Rhea" id="RHEA-COMP:10286"/>
        <dbReference type="Rhea" id="RHEA-COMP:10287"/>
        <dbReference type="ChEBI" id="CHEBI:15378"/>
        <dbReference type="ChEBI" id="CHEBI:57856"/>
        <dbReference type="ChEBI" id="CHEBI:59789"/>
        <dbReference type="ChEBI" id="CHEBI:74506"/>
        <dbReference type="ChEBI" id="CHEBI:82748"/>
        <dbReference type="EC" id="2.1.1.199"/>
    </reaction>
</comment>
<comment type="subcellular location">
    <subcellularLocation>
        <location evidence="1">Cytoplasm</location>
    </subcellularLocation>
</comment>
<comment type="similarity">
    <text evidence="1">Belongs to the methyltransferase superfamily. RsmH family.</text>
</comment>
<feature type="chain" id="PRO_0000386946" description="Ribosomal RNA small subunit methyltransferase H">
    <location>
        <begin position="1"/>
        <end position="315"/>
    </location>
</feature>
<feature type="region of interest" description="Disordered" evidence="2">
    <location>
        <begin position="290"/>
        <end position="315"/>
    </location>
</feature>
<feature type="compositionally biased region" description="Polar residues" evidence="2">
    <location>
        <begin position="292"/>
        <end position="304"/>
    </location>
</feature>
<feature type="binding site" evidence="1">
    <location>
        <begin position="33"/>
        <end position="35"/>
    </location>
    <ligand>
        <name>S-adenosyl-L-methionine</name>
        <dbReference type="ChEBI" id="CHEBI:59789"/>
    </ligand>
</feature>
<feature type="binding site" evidence="1">
    <location>
        <position position="52"/>
    </location>
    <ligand>
        <name>S-adenosyl-L-methionine</name>
        <dbReference type="ChEBI" id="CHEBI:59789"/>
    </ligand>
</feature>
<feature type="binding site" evidence="1">
    <location>
        <position position="84"/>
    </location>
    <ligand>
        <name>S-adenosyl-L-methionine</name>
        <dbReference type="ChEBI" id="CHEBI:59789"/>
    </ligand>
</feature>
<feature type="binding site" evidence="1">
    <location>
        <position position="106"/>
    </location>
    <ligand>
        <name>S-adenosyl-L-methionine</name>
        <dbReference type="ChEBI" id="CHEBI:59789"/>
    </ligand>
</feature>
<feature type="binding site" evidence="1">
    <location>
        <position position="113"/>
    </location>
    <ligand>
        <name>S-adenosyl-L-methionine</name>
        <dbReference type="ChEBI" id="CHEBI:59789"/>
    </ligand>
</feature>
<sequence>MKFKHTSVLLHETIDNLKPKNGGLYVDATFGGGGHAKYLLSKIETGTLVGFDQDEYAIKSAELNFADLLQPDSEPRLKLVHDNFSNLEQDLVKLGYSDGIDGIYYDLGVSSPQFDQADRGFSYRYNARLDMRMDQSQDTDAYQLVNTLSQKELADILYQYGDEKFSRQIAHRIVERRKDKPIVTTFELVDIIKEAIPAYARRTGGHPAKKSFQALRVAVNHELDVLQASLEEAIRILRPGGRISVITFQSHEDKIVKKIFKKYSEVEVPRGMPFVPDDMKPTLRLENRKPITASTSELENNNRSHSAKLRVAEKL</sequence>
<name>RSMH_LACH4</name>